<gene>
    <name type="primary">ilvR</name>
    <name type="ordered locus">CC_3045</name>
</gene>
<name>ILVR_CAUVC</name>
<dbReference type="EMBL" id="L24392">
    <property type="protein sequence ID" value="AAA80550.1"/>
    <property type="molecule type" value="Genomic_DNA"/>
</dbReference>
<dbReference type="EMBL" id="AE005673">
    <property type="protein sequence ID" value="AAK25007.1"/>
    <property type="molecule type" value="Genomic_DNA"/>
</dbReference>
<dbReference type="PIR" id="A53372">
    <property type="entry name" value="A53372"/>
</dbReference>
<dbReference type="RefSeq" id="NP_421839.1">
    <property type="nucleotide sequence ID" value="NC_002696.2"/>
</dbReference>
<dbReference type="RefSeq" id="WP_010920881.1">
    <property type="nucleotide sequence ID" value="NC_002696.2"/>
</dbReference>
<dbReference type="SMR" id="P52670"/>
<dbReference type="STRING" id="190650.CC_3045"/>
<dbReference type="EnsemblBacteria" id="AAK25007">
    <property type="protein sequence ID" value="AAK25007"/>
    <property type="gene ID" value="CC_3045"/>
</dbReference>
<dbReference type="KEGG" id="ccr:CC_3045"/>
<dbReference type="PATRIC" id="fig|190650.5.peg.3049"/>
<dbReference type="eggNOG" id="COG0583">
    <property type="taxonomic scope" value="Bacteria"/>
</dbReference>
<dbReference type="HOGENOM" id="CLU_039613_6_4_5"/>
<dbReference type="BioCyc" id="CAULO:CC3045-MONOMER"/>
<dbReference type="Proteomes" id="UP000001816">
    <property type="component" value="Chromosome"/>
</dbReference>
<dbReference type="GO" id="GO:0032993">
    <property type="term" value="C:protein-DNA complex"/>
    <property type="evidence" value="ECO:0007669"/>
    <property type="project" value="TreeGrafter"/>
</dbReference>
<dbReference type="GO" id="GO:0003677">
    <property type="term" value="F:DNA binding"/>
    <property type="evidence" value="ECO:0007669"/>
    <property type="project" value="UniProtKB-KW"/>
</dbReference>
<dbReference type="GO" id="GO:0003700">
    <property type="term" value="F:DNA-binding transcription factor activity"/>
    <property type="evidence" value="ECO:0007669"/>
    <property type="project" value="InterPro"/>
</dbReference>
<dbReference type="GO" id="GO:0008652">
    <property type="term" value="P:amino acid biosynthetic process"/>
    <property type="evidence" value="ECO:0007669"/>
    <property type="project" value="UniProtKB-KW"/>
</dbReference>
<dbReference type="GO" id="GO:0009082">
    <property type="term" value="P:branched-chain amino acid biosynthetic process"/>
    <property type="evidence" value="ECO:0007669"/>
    <property type="project" value="UniProtKB-KW"/>
</dbReference>
<dbReference type="CDD" id="cd08453">
    <property type="entry name" value="PBP2_IlvR"/>
    <property type="match status" value="1"/>
</dbReference>
<dbReference type="FunFam" id="1.10.10.10:FF:000001">
    <property type="entry name" value="LysR family transcriptional regulator"/>
    <property type="match status" value="1"/>
</dbReference>
<dbReference type="Gene3D" id="3.40.190.10">
    <property type="entry name" value="Periplasmic binding protein-like II"/>
    <property type="match status" value="2"/>
</dbReference>
<dbReference type="Gene3D" id="1.10.10.10">
    <property type="entry name" value="Winged helix-like DNA-binding domain superfamily/Winged helix DNA-binding domain"/>
    <property type="match status" value="1"/>
</dbReference>
<dbReference type="InterPro" id="IPR037412">
    <property type="entry name" value="IlvR_PBP2"/>
</dbReference>
<dbReference type="InterPro" id="IPR005119">
    <property type="entry name" value="LysR_subst-bd"/>
</dbReference>
<dbReference type="InterPro" id="IPR000847">
    <property type="entry name" value="Tscrpt_reg_HTH_LysR"/>
</dbReference>
<dbReference type="InterPro" id="IPR036388">
    <property type="entry name" value="WH-like_DNA-bd_sf"/>
</dbReference>
<dbReference type="InterPro" id="IPR036390">
    <property type="entry name" value="WH_DNA-bd_sf"/>
</dbReference>
<dbReference type="PANTHER" id="PTHR30346:SF17">
    <property type="entry name" value="LYSR FAMILY TRANSCRIPTIONAL REGULATOR"/>
    <property type="match status" value="1"/>
</dbReference>
<dbReference type="PANTHER" id="PTHR30346">
    <property type="entry name" value="TRANSCRIPTIONAL DUAL REGULATOR HCAR-RELATED"/>
    <property type="match status" value="1"/>
</dbReference>
<dbReference type="Pfam" id="PF00126">
    <property type="entry name" value="HTH_1"/>
    <property type="match status" value="1"/>
</dbReference>
<dbReference type="Pfam" id="PF03466">
    <property type="entry name" value="LysR_substrate"/>
    <property type="match status" value="1"/>
</dbReference>
<dbReference type="PRINTS" id="PR00039">
    <property type="entry name" value="HTHLYSR"/>
</dbReference>
<dbReference type="SUPFAM" id="SSF53850">
    <property type="entry name" value="Periplasmic binding protein-like II"/>
    <property type="match status" value="1"/>
</dbReference>
<dbReference type="SUPFAM" id="SSF46785">
    <property type="entry name" value="Winged helix' DNA-binding domain"/>
    <property type="match status" value="1"/>
</dbReference>
<dbReference type="PROSITE" id="PS50931">
    <property type="entry name" value="HTH_LYSR"/>
    <property type="match status" value="1"/>
</dbReference>
<evidence type="ECO:0000255" key="1">
    <source>
        <dbReference type="PROSITE-ProRule" id="PRU00253"/>
    </source>
</evidence>
<evidence type="ECO:0000305" key="2"/>
<proteinExistence type="inferred from homology"/>
<protein>
    <recommendedName>
        <fullName>HTH-type transcriptional regulator IlvR</fullName>
    </recommendedName>
    <alternativeName>
        <fullName>Isoleucine biosynthesis transcriptional activator</fullName>
    </alternativeName>
</protein>
<reference key="1">
    <citation type="journal article" date="1994" name="J. Bacteriol.">
        <title>Identification and characterization of the ilvR gene encoding a LysR-type regulator of Caulobacter crescentus.</title>
        <authorList>
            <person name="Malakooti J."/>
            <person name="Ely B."/>
        </authorList>
    </citation>
    <scope>NUCLEOTIDE SEQUENCE [GENOMIC DNA]</scope>
    <source>
        <strain>ATCC 19089 / CIP 103742 / CB 15</strain>
    </source>
</reference>
<reference key="2">
    <citation type="journal article" date="2001" name="Proc. Natl. Acad. Sci. U.S.A.">
        <title>Complete genome sequence of Caulobacter crescentus.</title>
        <authorList>
            <person name="Nierman W.C."/>
            <person name="Feldblyum T.V."/>
            <person name="Laub M.T."/>
            <person name="Paulsen I.T."/>
            <person name="Nelson K.E."/>
            <person name="Eisen J.A."/>
            <person name="Heidelberg J.F."/>
            <person name="Alley M.R.K."/>
            <person name="Ohta N."/>
            <person name="Maddock J.R."/>
            <person name="Potocka I."/>
            <person name="Nelson W.C."/>
            <person name="Newton A."/>
            <person name="Stephens C."/>
            <person name="Phadke N.D."/>
            <person name="Ely B."/>
            <person name="DeBoy R.T."/>
            <person name="Dodson R.J."/>
            <person name="Durkin A.S."/>
            <person name="Gwinn M.L."/>
            <person name="Haft D.H."/>
            <person name="Kolonay J.F."/>
            <person name="Smit J."/>
            <person name="Craven M.B."/>
            <person name="Khouri H.M."/>
            <person name="Shetty J."/>
            <person name="Berry K.J."/>
            <person name="Utterback T.R."/>
            <person name="Tran K."/>
            <person name="Wolf A.M."/>
            <person name="Vamathevan J.J."/>
            <person name="Ermolaeva M.D."/>
            <person name="White O."/>
            <person name="Salzberg S.L."/>
            <person name="Venter J.C."/>
            <person name="Shapiro L."/>
            <person name="Fraser C.M."/>
        </authorList>
    </citation>
    <scope>NUCLEOTIDE SEQUENCE [LARGE SCALE GENOMIC DNA]</scope>
    <source>
        <strain>ATCC 19089 / CIP 103742 / CB 15</strain>
    </source>
</reference>
<organism>
    <name type="scientific">Caulobacter vibrioides (strain ATCC 19089 / CIP 103742 / CB 15)</name>
    <name type="common">Caulobacter crescentus</name>
    <dbReference type="NCBI Taxonomy" id="190650"/>
    <lineage>
        <taxon>Bacteria</taxon>
        <taxon>Pseudomonadati</taxon>
        <taxon>Pseudomonadota</taxon>
        <taxon>Alphaproteobacteria</taxon>
        <taxon>Caulobacterales</taxon>
        <taxon>Caulobacteraceae</taxon>
        <taxon>Caulobacter</taxon>
    </lineage>
</organism>
<comment type="function">
    <text>Positively regulates the expression of the ilvD gene while negatively autoregulating its own expression.</text>
</comment>
<comment type="similarity">
    <text evidence="2">Belongs to the LysR transcriptional regulatory family.</text>
</comment>
<keyword id="KW-0010">Activator</keyword>
<keyword id="KW-0028">Amino-acid biosynthesis</keyword>
<keyword id="KW-0100">Branched-chain amino acid biosynthesis</keyword>
<keyword id="KW-0238">DNA-binding</keyword>
<keyword id="KW-1185">Reference proteome</keyword>
<keyword id="KW-0678">Repressor</keyword>
<keyword id="KW-0804">Transcription</keyword>
<keyword id="KW-0805">Transcription regulation</keyword>
<sequence length="296" mass="31903">MDIRQFRHFAAVAETLHFGRAAERLGITQPPLSQSIQALEKALGAPLFARTKRHVELTALGRQWLPHVLEALAAVDALPDTARRLRDGQTGYLSLSFVSTADYSVLPDLVRRYAEAFPGVEIQLVEATSDVQVPAIQAGERHAGIIIPPPNRSLPAALAYRRLVSEPLVAVTPEAWGAEGPLDLAALADVPLVLFPRTVAPAFHDLVTGYVAARGQPVRIVQEAIQMQTIISLVSAGLGMALAPASLRKLARVGVRYVDLVDPPILETGLVWRRDEAAPTLQGLLRLVTEDGSAPD</sequence>
<feature type="chain" id="PRO_0000105654" description="HTH-type transcriptional regulator IlvR">
    <location>
        <begin position="1"/>
        <end position="296"/>
    </location>
</feature>
<feature type="domain" description="HTH lysR-type" evidence="1">
    <location>
        <begin position="1"/>
        <end position="58"/>
    </location>
</feature>
<feature type="DNA-binding region" description="H-T-H motif" evidence="1">
    <location>
        <begin position="18"/>
        <end position="37"/>
    </location>
</feature>
<accession>P52670</accession>